<organism>
    <name type="scientific">Escherichia coli</name>
    <dbReference type="NCBI Taxonomy" id="562"/>
    <lineage>
        <taxon>Bacteria</taxon>
        <taxon>Pseudomonadati</taxon>
        <taxon>Pseudomonadota</taxon>
        <taxon>Gammaproteobacteria</taxon>
        <taxon>Enterobacterales</taxon>
        <taxon>Enterobacteriaceae</taxon>
        <taxon>Escherichia</taxon>
    </lineage>
</organism>
<protein>
    <recommendedName>
        <fullName evidence="5">Retron Ec86 putative ribosyltransferase/DNA-binding protein</fullName>
    </recommendedName>
    <alternativeName>
        <fullName evidence="4">ORF223</fullName>
    </alternativeName>
</protein>
<evidence type="ECO:0000269" key="1">
    <source>
    </source>
</evidence>
<evidence type="ECO:0000269" key="2">
    <source>
    </source>
</evidence>
<evidence type="ECO:0000269" key="3">
    <source>
    </source>
</evidence>
<evidence type="ECO:0000303" key="4">
    <source>
    </source>
</evidence>
<evidence type="ECO:0000303" key="5">
    <source>
    </source>
</evidence>
<evidence type="ECO:0000305" key="6"/>
<evidence type="ECO:0000305" key="7">
    <source>
    </source>
</evidence>
<evidence type="ECO:0000312" key="8">
    <source>
        <dbReference type="EMBL" id="M24408"/>
    </source>
</evidence>
<evidence type="ECO:0000312" key="9">
    <source>
        <dbReference type="EMBL" id="X60206"/>
    </source>
</evidence>
<evidence type="ECO:0007829" key="10">
    <source>
        <dbReference type="PDB" id="7V9X"/>
    </source>
</evidence>
<evidence type="ECO:0007829" key="11">
    <source>
        <dbReference type="PDB" id="7XJG"/>
    </source>
</evidence>
<evidence type="ECO:0007829" key="12">
    <source>
        <dbReference type="PDB" id="8QBK"/>
    </source>
</evidence>
<evidence type="ECO:0007829" key="13">
    <source>
        <dbReference type="PDB" id="8QBL"/>
    </source>
</evidence>
<reference evidence="9" key="1">
    <citation type="journal article" date="1991" name="Mol. Microbiol.">
        <title>Structure of two retrons of Escherichia coli and their common chromosomal insertion site.</title>
        <authorList>
            <person name="Lim D."/>
        </authorList>
    </citation>
    <scope>NUCLEOTIDE SEQUENCE [GENOMIC DNA]</scope>
    <source>
        <strain>B / AC2514</strain>
    </source>
</reference>
<reference evidence="8" key="2">
    <citation type="journal article" date="1989" name="Cell">
        <title>Reverse transcriptase-dependent synthesis of a covalently linked, branched DNA-RNA compound in E. coli B.</title>
        <authorList>
            <person name="Lim D."/>
            <person name="Maas W.K."/>
        </authorList>
    </citation>
    <scope>NUCLEOTIDE SEQUENCE [GENOMIC DNA] OF 181-307</scope>
    <source>
        <strain>B / AC2514</strain>
    </source>
</reference>
<reference key="3">
    <citation type="journal article" date="2020" name="Cell">
        <title>Bacterial Retrons Function In Anti-Phage Defense.</title>
        <authorList>
            <person name="Millman A."/>
            <person name="Bernheim A."/>
            <person name="Stokar-Avihail A."/>
            <person name="Fedorenko T."/>
            <person name="Voichek M."/>
            <person name="Leavitt A."/>
            <person name="Oppenheimer-Shaanan Y."/>
            <person name="Sorek R."/>
        </authorList>
    </citation>
    <scope>FUNCTION IN ANTIVIRAL DEFENSE</scope>
    <scope>IDENTIFICATION AS A RETRON</scope>
    <source>
        <strain>BL21 (DE3)</strain>
    </source>
</reference>
<feature type="chain" id="PRO_0000456033" description="Retron Ec86 putative ribosyltransferase/DNA-binding protein">
    <location>
        <begin position="1"/>
        <end position="307"/>
    </location>
</feature>
<feature type="helix" evidence="11">
    <location>
        <begin position="7"/>
        <end position="17"/>
    </location>
</feature>
<feature type="strand" evidence="11">
    <location>
        <begin position="30"/>
        <end position="35"/>
    </location>
</feature>
<feature type="strand" evidence="13">
    <location>
        <begin position="39"/>
        <end position="43"/>
    </location>
</feature>
<feature type="helix" evidence="11">
    <location>
        <begin position="46"/>
        <end position="54"/>
    </location>
</feature>
<feature type="strand" evidence="11">
    <location>
        <begin position="55"/>
        <end position="62"/>
    </location>
</feature>
<feature type="turn" evidence="11">
    <location>
        <begin position="64"/>
        <end position="67"/>
    </location>
</feature>
<feature type="helix" evidence="11">
    <location>
        <begin position="68"/>
        <end position="71"/>
    </location>
</feature>
<feature type="strand" evidence="13">
    <location>
        <begin position="76"/>
        <end position="78"/>
    </location>
</feature>
<feature type="helix" evidence="11">
    <location>
        <begin position="80"/>
        <end position="90"/>
    </location>
</feature>
<feature type="strand" evidence="11">
    <location>
        <begin position="94"/>
        <end position="96"/>
    </location>
</feature>
<feature type="helix" evidence="11">
    <location>
        <begin position="101"/>
        <end position="110"/>
    </location>
</feature>
<feature type="strand" evidence="11">
    <location>
        <begin position="111"/>
        <end position="115"/>
    </location>
</feature>
<feature type="turn" evidence="11">
    <location>
        <begin position="116"/>
        <end position="119"/>
    </location>
</feature>
<feature type="strand" evidence="11">
    <location>
        <begin position="120"/>
        <end position="124"/>
    </location>
</feature>
<feature type="helix" evidence="11">
    <location>
        <begin position="126"/>
        <end position="128"/>
    </location>
</feature>
<feature type="strand" evidence="11">
    <location>
        <begin position="129"/>
        <end position="132"/>
    </location>
</feature>
<feature type="helix" evidence="11">
    <location>
        <begin position="134"/>
        <end position="137"/>
    </location>
</feature>
<feature type="helix" evidence="11">
    <location>
        <begin position="139"/>
        <end position="146"/>
    </location>
</feature>
<feature type="helix" evidence="12">
    <location>
        <begin position="148"/>
        <end position="150"/>
    </location>
</feature>
<feature type="strand" evidence="11">
    <location>
        <begin position="151"/>
        <end position="153"/>
    </location>
</feature>
<feature type="helix" evidence="11">
    <location>
        <begin position="156"/>
        <end position="161"/>
    </location>
</feature>
<feature type="turn" evidence="11">
    <location>
        <begin position="162"/>
        <end position="164"/>
    </location>
</feature>
<feature type="helix" evidence="11">
    <location>
        <begin position="168"/>
        <end position="171"/>
    </location>
</feature>
<feature type="helix" evidence="11">
    <location>
        <begin position="174"/>
        <end position="189"/>
    </location>
</feature>
<feature type="turn" evidence="11">
    <location>
        <begin position="200"/>
        <end position="202"/>
    </location>
</feature>
<feature type="helix" evidence="11">
    <location>
        <begin position="203"/>
        <end position="212"/>
    </location>
</feature>
<feature type="strand" evidence="13">
    <location>
        <begin position="213"/>
        <end position="216"/>
    </location>
</feature>
<feature type="helix" evidence="11">
    <location>
        <begin position="218"/>
        <end position="229"/>
    </location>
</feature>
<feature type="helix" evidence="11">
    <location>
        <begin position="237"/>
        <end position="249"/>
    </location>
</feature>
<feature type="strand" evidence="11">
    <location>
        <begin position="252"/>
        <end position="256"/>
    </location>
</feature>
<feature type="strand" evidence="11">
    <location>
        <begin position="259"/>
        <end position="262"/>
    </location>
</feature>
<feature type="helix" evidence="11">
    <location>
        <begin position="264"/>
        <end position="273"/>
    </location>
</feature>
<feature type="helix" evidence="11">
    <location>
        <begin position="276"/>
        <end position="291"/>
    </location>
</feature>
<feature type="strand" evidence="10">
    <location>
        <begin position="292"/>
        <end position="294"/>
    </location>
</feature>
<gene>
    <name type="ORF">LM2_00875</name>
</gene>
<keyword id="KW-0002">3D-structure</keyword>
<keyword id="KW-0051">Antiviral defense</keyword>
<name>RIB86_ECOLX</name>
<dbReference type="EMBL" id="M24408">
    <property type="status" value="NOT_ANNOTATED_CDS"/>
    <property type="molecule type" value="Genomic_DNA"/>
</dbReference>
<dbReference type="EMBL" id="X60206">
    <property type="status" value="NOT_ANNOTATED_CDS"/>
    <property type="molecule type" value="Genomic_DNA"/>
</dbReference>
<dbReference type="RefSeq" id="WP_001034589.1">
    <property type="nucleotide sequence ID" value="NZ_WOEL01000022.1"/>
</dbReference>
<dbReference type="PDB" id="7V9X">
    <property type="method" value="EM"/>
    <property type="resolution" value="2.82 A"/>
    <property type="chains" value="C=1-307"/>
</dbReference>
<dbReference type="PDB" id="7XJG">
    <property type="method" value="EM"/>
    <property type="resolution" value="2.51 A"/>
    <property type="chains" value="C/J=1-307"/>
</dbReference>
<dbReference type="PDB" id="8QBK">
    <property type="method" value="EM"/>
    <property type="resolution" value="2.99 A"/>
    <property type="chains" value="E/F/G/T=1-307"/>
</dbReference>
<dbReference type="PDB" id="8QBL">
    <property type="method" value="EM"/>
    <property type="resolution" value="2.66 A"/>
    <property type="chains" value="E/F/G/H/T=1-307"/>
</dbReference>
<dbReference type="PDB" id="8QBM">
    <property type="method" value="EM"/>
    <property type="resolution" value="3.09 A"/>
    <property type="chains" value="E/F/G/H/T=1-307"/>
</dbReference>
<dbReference type="PDB" id="9JM0">
    <property type="method" value="EM"/>
    <property type="resolution" value="2.70 A"/>
    <property type="chains" value="C/J/L/T=1-307"/>
</dbReference>
<dbReference type="PDBsum" id="7V9X"/>
<dbReference type="PDBsum" id="7XJG"/>
<dbReference type="PDBsum" id="8QBK"/>
<dbReference type="PDBsum" id="8QBL"/>
<dbReference type="PDBsum" id="8QBM"/>
<dbReference type="PDBsum" id="9JM0"/>
<dbReference type="EMDB" id="EMD-18313"/>
<dbReference type="EMDB" id="EMD-18314"/>
<dbReference type="EMDB" id="EMD-18315"/>
<dbReference type="EMDB" id="EMD-18317"/>
<dbReference type="EMDB" id="EMD-19792"/>
<dbReference type="EMDB" id="EMD-19793"/>
<dbReference type="EMDB" id="EMD-61595"/>
<dbReference type="SMR" id="P0DV88"/>
<dbReference type="OMA" id="CEIATKC"/>
<dbReference type="GO" id="GO:0051607">
    <property type="term" value="P:defense response to virus"/>
    <property type="evidence" value="ECO:0007669"/>
    <property type="project" value="UniProtKB-KW"/>
</dbReference>
<dbReference type="InterPro" id="IPR049725">
    <property type="entry name" value="STM3845-like"/>
</dbReference>
<dbReference type="NCBIfam" id="NF038232">
    <property type="entry name" value="STM3845_fam"/>
    <property type="match status" value="1"/>
</dbReference>
<comment type="function">
    <text evidence="3">Possible ribosyltransferase/DNA-binding component of antiviral defense system retron Ec86, composed of a non-coding RNA (ncRNA), a ribosyltransferase/DNA-binding protein and a reverse transcriptase (RT). Expression of the 3-gene retron confers protection against bacteriophages T5. At multiplicity of infection (MOI) of 0.02 cultures grow normally when infected with T5 without collapsing, at MOI 2 cultures enter growth stasis.</text>
</comment>
<comment type="caution">
    <text evidence="1 2 7">DNA from strain B / AC2514 has genes in the order ribosyltransferase-ncRNA-RT (PubMed:1722556, PubMed:2466573). The data presented in Millman et al says genes are encoded in the order ncRNA-ribosyltransferase-RT.</text>
</comment>
<comment type="sequence caution" evidence="6">
    <conflict type="frameshift">
        <sequence resource="EMBL" id="M24408"/>
    </conflict>
</comment>
<comment type="sequence caution" evidence="6">
    <conflict type="frameshift">
        <sequence resource="EMBL" id="X60206"/>
    </conflict>
</comment>
<accession>P0DV88</accession>
<proteinExistence type="evidence at protein level"/>
<sequence>MNKKFTDEQQQQLIGHLTKKGFYRGANIKITIFLCGGDVANHQSWRHQLSQFLAKFSDVDIFYPEDLFDDLLAGQGQHSLLSLENILAEAVDVIILFPESPGSFTELGAFSNNENLRRKLICIQDAKFKSKRSFINYGPVRLLRKFNSKSVLRCSSNELKEMCDSSIDVARKLRLYKKLMASIKKVRKENKVSKDIGNILYAERFLLPCIYLLDSVNYRTLCELAFKAIKQDDVLSKIIVRSVVSRLINERKILQMTDGYQVTALGASYVRSVFDRKTLDRLRLEIMNFENRRKSTFNYDKIPYAHP</sequence>